<reference key="1">
    <citation type="journal article" date="2004" name="Nat. Genet.">
        <title>Complete sequencing and characterization of 21,243 full-length human cDNAs.</title>
        <authorList>
            <person name="Ota T."/>
            <person name="Suzuki Y."/>
            <person name="Nishikawa T."/>
            <person name="Otsuki T."/>
            <person name="Sugiyama T."/>
            <person name="Irie R."/>
            <person name="Wakamatsu A."/>
            <person name="Hayashi K."/>
            <person name="Sato H."/>
            <person name="Nagai K."/>
            <person name="Kimura K."/>
            <person name="Makita H."/>
            <person name="Sekine M."/>
            <person name="Obayashi M."/>
            <person name="Nishi T."/>
            <person name="Shibahara T."/>
            <person name="Tanaka T."/>
            <person name="Ishii S."/>
            <person name="Yamamoto J."/>
            <person name="Saito K."/>
            <person name="Kawai Y."/>
            <person name="Isono Y."/>
            <person name="Nakamura Y."/>
            <person name="Nagahari K."/>
            <person name="Murakami K."/>
            <person name="Yasuda T."/>
            <person name="Iwayanagi T."/>
            <person name="Wagatsuma M."/>
            <person name="Shiratori A."/>
            <person name="Sudo H."/>
            <person name="Hosoiri T."/>
            <person name="Kaku Y."/>
            <person name="Kodaira H."/>
            <person name="Kondo H."/>
            <person name="Sugawara M."/>
            <person name="Takahashi M."/>
            <person name="Kanda K."/>
            <person name="Yokoi T."/>
            <person name="Furuya T."/>
            <person name="Kikkawa E."/>
            <person name="Omura Y."/>
            <person name="Abe K."/>
            <person name="Kamihara K."/>
            <person name="Katsuta N."/>
            <person name="Sato K."/>
            <person name="Tanikawa M."/>
            <person name="Yamazaki M."/>
            <person name="Ninomiya K."/>
            <person name="Ishibashi T."/>
            <person name="Yamashita H."/>
            <person name="Murakawa K."/>
            <person name="Fujimori K."/>
            <person name="Tanai H."/>
            <person name="Kimata M."/>
            <person name="Watanabe M."/>
            <person name="Hiraoka S."/>
            <person name="Chiba Y."/>
            <person name="Ishida S."/>
            <person name="Ono Y."/>
            <person name="Takiguchi S."/>
            <person name="Watanabe S."/>
            <person name="Yosida M."/>
            <person name="Hotuta T."/>
            <person name="Kusano J."/>
            <person name="Kanehori K."/>
            <person name="Takahashi-Fujii A."/>
            <person name="Hara H."/>
            <person name="Tanase T.-O."/>
            <person name="Nomura Y."/>
            <person name="Togiya S."/>
            <person name="Komai F."/>
            <person name="Hara R."/>
            <person name="Takeuchi K."/>
            <person name="Arita M."/>
            <person name="Imose N."/>
            <person name="Musashino K."/>
            <person name="Yuuki H."/>
            <person name="Oshima A."/>
            <person name="Sasaki N."/>
            <person name="Aotsuka S."/>
            <person name="Yoshikawa Y."/>
            <person name="Matsunawa H."/>
            <person name="Ichihara T."/>
            <person name="Shiohata N."/>
            <person name="Sano S."/>
            <person name="Moriya S."/>
            <person name="Momiyama H."/>
            <person name="Satoh N."/>
            <person name="Takami S."/>
            <person name="Terashima Y."/>
            <person name="Suzuki O."/>
            <person name="Nakagawa S."/>
            <person name="Senoh A."/>
            <person name="Mizoguchi H."/>
            <person name="Goto Y."/>
            <person name="Shimizu F."/>
            <person name="Wakebe H."/>
            <person name="Hishigaki H."/>
            <person name="Watanabe T."/>
            <person name="Sugiyama A."/>
            <person name="Takemoto M."/>
            <person name="Kawakami B."/>
            <person name="Yamazaki M."/>
            <person name="Watanabe K."/>
            <person name="Kumagai A."/>
            <person name="Itakura S."/>
            <person name="Fukuzumi Y."/>
            <person name="Fujimori Y."/>
            <person name="Komiyama M."/>
            <person name="Tashiro H."/>
            <person name="Tanigami A."/>
            <person name="Fujiwara T."/>
            <person name="Ono T."/>
            <person name="Yamada K."/>
            <person name="Fujii Y."/>
            <person name="Ozaki K."/>
            <person name="Hirao M."/>
            <person name="Ohmori Y."/>
            <person name="Kawabata A."/>
            <person name="Hikiji T."/>
            <person name="Kobatake N."/>
            <person name="Inagaki H."/>
            <person name="Ikema Y."/>
            <person name="Okamoto S."/>
            <person name="Okitani R."/>
            <person name="Kawakami T."/>
            <person name="Noguchi S."/>
            <person name="Itoh T."/>
            <person name="Shigeta K."/>
            <person name="Senba T."/>
            <person name="Matsumura K."/>
            <person name="Nakajima Y."/>
            <person name="Mizuno T."/>
            <person name="Morinaga M."/>
            <person name="Sasaki M."/>
            <person name="Togashi T."/>
            <person name="Oyama M."/>
            <person name="Hata H."/>
            <person name="Watanabe M."/>
            <person name="Komatsu T."/>
            <person name="Mizushima-Sugano J."/>
            <person name="Satoh T."/>
            <person name="Shirai Y."/>
            <person name="Takahashi Y."/>
            <person name="Nakagawa K."/>
            <person name="Okumura K."/>
            <person name="Nagase T."/>
            <person name="Nomura N."/>
            <person name="Kikuchi H."/>
            <person name="Masuho Y."/>
            <person name="Yamashita R."/>
            <person name="Nakai K."/>
            <person name="Yada T."/>
            <person name="Nakamura Y."/>
            <person name="Ohara O."/>
            <person name="Isogai T."/>
            <person name="Sugano S."/>
        </authorList>
    </citation>
    <scope>NUCLEOTIDE SEQUENCE [LARGE SCALE MRNA]</scope>
    <source>
        <tissue>Tongue</tissue>
    </source>
</reference>
<reference key="2">
    <citation type="journal article" date="2004" name="Proc. Natl. Acad. Sci. U.S.A.">
        <title>Large-scale cDNA transfection screening for genes related to cancer development and progression.</title>
        <authorList>
            <person name="Wan D."/>
            <person name="Gong Y."/>
            <person name="Qin W."/>
            <person name="Zhang P."/>
            <person name="Li J."/>
            <person name="Wei L."/>
            <person name="Zhou X."/>
            <person name="Li H."/>
            <person name="Qiu X."/>
            <person name="Zhong F."/>
            <person name="He L."/>
            <person name="Yu J."/>
            <person name="Yao G."/>
            <person name="Jiang H."/>
            <person name="Qian L."/>
            <person name="Yu Y."/>
            <person name="Shu H."/>
            <person name="Chen X."/>
            <person name="Xu H."/>
            <person name="Guo M."/>
            <person name="Pan Z."/>
            <person name="Chen Y."/>
            <person name="Ge C."/>
            <person name="Yang S."/>
            <person name="Gu J."/>
        </authorList>
    </citation>
    <scope>NUCLEOTIDE SEQUENCE [LARGE SCALE MRNA]</scope>
</reference>
<reference key="3">
    <citation type="submission" date="2005-07" db="EMBL/GenBank/DDBJ databases">
        <authorList>
            <person name="Mural R.J."/>
            <person name="Istrail S."/>
            <person name="Sutton G.G."/>
            <person name="Florea L."/>
            <person name="Halpern A.L."/>
            <person name="Mobarry C.M."/>
            <person name="Lippert R."/>
            <person name="Walenz B."/>
            <person name="Shatkay H."/>
            <person name="Dew I."/>
            <person name="Miller J.R."/>
            <person name="Flanigan M.J."/>
            <person name="Edwards N.J."/>
            <person name="Bolanos R."/>
            <person name="Fasulo D."/>
            <person name="Halldorsson B.V."/>
            <person name="Hannenhalli S."/>
            <person name="Turner R."/>
            <person name="Yooseph S."/>
            <person name="Lu F."/>
            <person name="Nusskern D.R."/>
            <person name="Shue B.C."/>
            <person name="Zheng X.H."/>
            <person name="Zhong F."/>
            <person name="Delcher A.L."/>
            <person name="Huson D.H."/>
            <person name="Kravitz S.A."/>
            <person name="Mouchard L."/>
            <person name="Reinert K."/>
            <person name="Remington K.A."/>
            <person name="Clark A.G."/>
            <person name="Waterman M.S."/>
            <person name="Eichler E.E."/>
            <person name="Adams M.D."/>
            <person name="Hunkapiller M.W."/>
            <person name="Myers E.W."/>
            <person name="Venter J.C."/>
        </authorList>
    </citation>
    <scope>NUCLEOTIDE SEQUENCE [LARGE SCALE GENOMIC DNA]</scope>
</reference>
<reference key="4">
    <citation type="journal article" date="2004" name="Genome Res.">
        <title>The status, quality, and expansion of the NIH full-length cDNA project: the Mammalian Gene Collection (MGC).</title>
        <authorList>
            <consortium name="The MGC Project Team"/>
        </authorList>
    </citation>
    <scope>NUCLEOTIDE SEQUENCE [LARGE SCALE MRNA]</scope>
</reference>
<reference key="5">
    <citation type="journal article" date="2017" name="Proc. Natl. Acad. Sci. U.S.A.">
        <title>HEMO, an ancestral endogenous retroviral envelope protein shed in the blood of pregnant women and expressed in pluripotent stem cells and tumors.</title>
        <authorList>
            <person name="Heidmann O."/>
            <person name="Beguin A."/>
            <person name="Paternina J."/>
            <person name="Berthier R."/>
            <person name="Deloger M."/>
            <person name="Bawa O."/>
            <person name="Heidmann T."/>
        </authorList>
    </citation>
    <scope>IDENTIFICATION BY MASS SPECTROMETRY</scope>
    <scope>SUBCELLULAR LOCATION</scope>
    <scope>TISSUE SPECIFICITY</scope>
    <scope>GLYCOSYLATION</scope>
    <scope>PROTEOLYTIC PROCESSING</scope>
    <scope>MUTAGENESIS OF 352-CYS--GLY-355; 433-ARG--LEU-563; 472-PRO--LEU-563 AND 489-SER--LEU-563</scope>
</reference>
<keyword id="KW-1003">Cell membrane</keyword>
<keyword id="KW-0895">ERV</keyword>
<keyword id="KW-0325">Glycoprotein</keyword>
<keyword id="KW-0472">Membrane</keyword>
<keyword id="KW-1267">Proteomics identification</keyword>
<keyword id="KW-1185">Reference proteome</keyword>
<keyword id="KW-0964">Secreted</keyword>
<keyword id="KW-0732">Signal</keyword>
<keyword id="KW-0812">Transmembrane</keyword>
<keyword id="KW-1133">Transmembrane helix</keyword>
<keyword id="KW-0814">Transposable element</keyword>
<name>MER34_HUMAN</name>
<organism>
    <name type="scientific">Homo sapiens</name>
    <name type="common">Human</name>
    <dbReference type="NCBI Taxonomy" id="9606"/>
    <lineage>
        <taxon>Eukaryota</taxon>
        <taxon>Metazoa</taxon>
        <taxon>Chordata</taxon>
        <taxon>Craniata</taxon>
        <taxon>Vertebrata</taxon>
        <taxon>Euteleostomi</taxon>
        <taxon>Mammalia</taxon>
        <taxon>Eutheria</taxon>
        <taxon>Euarchontoglires</taxon>
        <taxon>Primates</taxon>
        <taxon>Haplorrhini</taxon>
        <taxon>Catarrhini</taxon>
        <taxon>Hominidae</taxon>
        <taxon>Homo</taxon>
    </lineage>
</organism>
<feature type="signal peptide" evidence="2">
    <location>
        <begin position="1"/>
        <end position="26"/>
    </location>
</feature>
<feature type="chain" id="PRO_0000341352" description="Endogenous retroviral envelope protein HEMO">
    <location>
        <begin position="27"/>
        <end position="563"/>
    </location>
</feature>
<feature type="chain" id="PRO_0000443800" description="Endogenous retroviral envelope protein HEMO, secreted form" evidence="5">
    <location>
        <begin position="27"/>
        <end position="432"/>
    </location>
</feature>
<feature type="topological domain" description="Extracellular" evidence="1">
    <location>
        <begin position="27"/>
        <end position="488"/>
    </location>
</feature>
<feature type="transmembrane region" description="Helical" evidence="1">
    <location>
        <begin position="489"/>
        <end position="509"/>
    </location>
</feature>
<feature type="topological domain" description="Cytoplasmic" evidence="1">
    <location>
        <begin position="510"/>
        <end position="563"/>
    </location>
</feature>
<feature type="glycosylation site" description="N-linked (GlcNAc...) asparagine" evidence="1">
    <location>
        <position position="122"/>
    </location>
</feature>
<feature type="glycosylation site" description="N-linked (GlcNAc...) asparagine" evidence="1">
    <location>
        <position position="192"/>
    </location>
</feature>
<feature type="mutagenesis site" description="Introduction of a furin cleavage site, promoting proteolytic cleavage of the protein by furin and release in the extracellular medium." evidence="2">
    <original>CTQG</original>
    <variation>RTKR</variation>
    <location>
        <begin position="352"/>
        <end position="355"/>
    </location>
</feature>
<feature type="mutagenesis site" description="Promotes release in the extracellular medium." evidence="2">
    <location>
        <begin position="433"/>
        <end position="563"/>
    </location>
</feature>
<feature type="mutagenesis site" description="Promotes release in the extracellular medium." evidence="2">
    <location>
        <begin position="472"/>
        <end position="563"/>
    </location>
</feature>
<feature type="mutagenesis site" description="Promotes release in the extracellular medium." evidence="2">
    <location>
        <begin position="489"/>
        <end position="563"/>
    </location>
</feature>
<feature type="sequence conflict" description="In Ref. 4; AAH69998." evidence="4" ref="4">
    <original>T</original>
    <variation>A</variation>
    <location>
        <position position="34"/>
    </location>
</feature>
<feature type="sequence conflict" description="In Ref. 4; AAH67529." evidence="4" ref="4">
    <original>W</original>
    <variation>R</variation>
    <location>
        <position position="81"/>
    </location>
</feature>
<feature type="sequence conflict" description="In Ref. 4; AAH67529." evidence="4" ref="4">
    <original>S</original>
    <variation>P</variation>
    <location>
        <position position="418"/>
    </location>
</feature>
<feature type="sequence conflict" description="In Ref. 4; AAH67529." evidence="4" ref="4">
    <original>Q</original>
    <variation>R</variation>
    <location>
        <position position="434"/>
    </location>
</feature>
<feature type="sequence conflict" description="In Ref. 4; AAH69998." evidence="4" ref="4">
    <original>Q</original>
    <variation>H</variation>
    <location>
        <position position="459"/>
    </location>
</feature>
<gene>
    <name evidence="6" type="primary">ERVMER34-1</name>
    <name evidence="3" type="synonym">HEMO</name>
    <name type="ORF">LP9056</name>
</gene>
<accession>Q9H9K5</accession>
<accession>B3KTB4</accession>
<accession>Q0P5R3</accession>
<accession>Q6NWN0</accession>
<evidence type="ECO:0000255" key="1"/>
<evidence type="ECO:0000269" key="2">
    <source>
    </source>
</evidence>
<evidence type="ECO:0000303" key="3">
    <source>
    </source>
</evidence>
<evidence type="ECO:0000305" key="4"/>
<evidence type="ECO:0000305" key="5">
    <source>
    </source>
</evidence>
<evidence type="ECO:0000312" key="6">
    <source>
        <dbReference type="HGNC" id="HGNC:42970"/>
    </source>
</evidence>
<dbReference type="EMBL" id="AY189288">
    <property type="protein sequence ID" value="AAO86732.1"/>
    <property type="molecule type" value="mRNA"/>
</dbReference>
<dbReference type="EMBL" id="AK022746">
    <property type="protein sequence ID" value="BAB14220.1"/>
    <property type="molecule type" value="mRNA"/>
</dbReference>
<dbReference type="EMBL" id="AK095318">
    <property type="protein sequence ID" value="BAG53026.1"/>
    <property type="molecule type" value="mRNA"/>
</dbReference>
<dbReference type="EMBL" id="CH471057">
    <property type="protein sequence ID" value="EAX05439.1"/>
    <property type="molecule type" value="Genomic_DNA"/>
</dbReference>
<dbReference type="EMBL" id="BC067526">
    <property type="protein sequence ID" value="AAH67526.1"/>
    <property type="molecule type" value="mRNA"/>
</dbReference>
<dbReference type="EMBL" id="BC067528">
    <property type="protein sequence ID" value="AAH67528.1"/>
    <property type="molecule type" value="mRNA"/>
</dbReference>
<dbReference type="EMBL" id="BC067529">
    <property type="protein sequence ID" value="AAH67529.1"/>
    <property type="molecule type" value="mRNA"/>
</dbReference>
<dbReference type="EMBL" id="BC069998">
    <property type="protein sequence ID" value="AAH69998.1"/>
    <property type="status" value="ALT_FRAME"/>
    <property type="molecule type" value="mRNA"/>
</dbReference>
<dbReference type="RefSeq" id="NP_001229619.1">
    <property type="nucleotide sequence ID" value="NM_001242690.2"/>
</dbReference>
<dbReference type="RefSeq" id="NP_078810.1">
    <property type="nucleotide sequence ID" value="NM_024534.6"/>
</dbReference>
<dbReference type="BioGRID" id="940070">
    <property type="interactions" value="20"/>
</dbReference>
<dbReference type="FunCoup" id="Q9H9K5">
    <property type="interactions" value="1"/>
</dbReference>
<dbReference type="IntAct" id="Q9H9K5">
    <property type="interactions" value="10"/>
</dbReference>
<dbReference type="STRING" id="9606.ENSP00000460602"/>
<dbReference type="GlyCosmos" id="Q9H9K5">
    <property type="glycosylation" value="2 sites, No reported glycans"/>
</dbReference>
<dbReference type="GlyGen" id="Q9H9K5">
    <property type="glycosylation" value="11 sites, 3 N-linked glycans (1 site), 1 O-linked glycan (2 sites)"/>
</dbReference>
<dbReference type="iPTMnet" id="Q9H9K5"/>
<dbReference type="PhosphoSitePlus" id="Q9H9K5"/>
<dbReference type="BioMuta" id="ERVMER34-1"/>
<dbReference type="DMDM" id="74734033"/>
<dbReference type="jPOST" id="Q9H9K5"/>
<dbReference type="MassIVE" id="Q9H9K5"/>
<dbReference type="PaxDb" id="9606-ENSP00000460602"/>
<dbReference type="PeptideAtlas" id="Q9H9K5"/>
<dbReference type="ProteomicsDB" id="81327"/>
<dbReference type="TopDownProteomics" id="Q9H9K5"/>
<dbReference type="Antibodypedia" id="63827">
    <property type="antibodies" value="5 antibodies from 5 providers"/>
</dbReference>
<dbReference type="DNASU" id="100288413"/>
<dbReference type="Ensembl" id="ENST00000440542.1">
    <property type="protein sequence ID" value="ENSP00000460255.1"/>
    <property type="gene ID" value="ENSG00000226887.8"/>
</dbReference>
<dbReference type="Ensembl" id="ENST00000443173.6">
    <property type="protein sequence ID" value="ENSP00000460602.1"/>
    <property type="gene ID" value="ENSG00000226887.8"/>
</dbReference>
<dbReference type="GeneID" id="100288413"/>
<dbReference type="KEGG" id="hsa:100288413"/>
<dbReference type="MANE-Select" id="ENST00000443173.6">
    <property type="protein sequence ID" value="ENSP00000460602.1"/>
    <property type="RefSeq nucleotide sequence ID" value="NM_001242690.2"/>
    <property type="RefSeq protein sequence ID" value="NP_001229619.1"/>
</dbReference>
<dbReference type="UCSC" id="uc003gzr.4">
    <property type="organism name" value="human"/>
</dbReference>
<dbReference type="AGR" id="HGNC:42970"/>
<dbReference type="CTD" id="100288413"/>
<dbReference type="DisGeNET" id="100288413"/>
<dbReference type="GeneCards" id="ERVMER34-1"/>
<dbReference type="HGNC" id="HGNC:42970">
    <property type="gene designation" value="ERVMER34-1"/>
</dbReference>
<dbReference type="HPA" id="ENSG00000226887">
    <property type="expression patterns" value="Tissue enhanced (parathyroid gland, placenta)"/>
</dbReference>
<dbReference type="neXtProt" id="NX_Q9H9K5"/>
<dbReference type="OpenTargets" id="ENSG00000226887"/>
<dbReference type="VEuPathDB" id="HostDB:ENSG00000226887"/>
<dbReference type="eggNOG" id="ENOG502SD08">
    <property type="taxonomic scope" value="Eukaryota"/>
</dbReference>
<dbReference type="GeneTree" id="ENSGT00870000136875"/>
<dbReference type="HOGENOM" id="CLU_483911_0_0_1"/>
<dbReference type="InParanoid" id="Q9H9K5"/>
<dbReference type="OMA" id="WRCADAN"/>
<dbReference type="OrthoDB" id="9437663at2759"/>
<dbReference type="PAN-GO" id="Q9H9K5">
    <property type="GO annotations" value="0 GO annotations based on evolutionary models"/>
</dbReference>
<dbReference type="PhylomeDB" id="Q9H9K5"/>
<dbReference type="TreeFam" id="TF344098"/>
<dbReference type="PathwayCommons" id="Q9H9K5"/>
<dbReference type="BioGRID-ORCS" id="100288413">
    <property type="hits" value="8 hits in 313 CRISPR screens"/>
</dbReference>
<dbReference type="ChiTaRS" id="ERVMER34-1">
    <property type="organism name" value="human"/>
</dbReference>
<dbReference type="GenomeRNAi" id="100288413"/>
<dbReference type="Pharos" id="Q9H9K5">
    <property type="development level" value="Tdark"/>
</dbReference>
<dbReference type="PRO" id="PR:Q9H9K5"/>
<dbReference type="Proteomes" id="UP000005640">
    <property type="component" value="Chromosome 4"/>
</dbReference>
<dbReference type="RNAct" id="Q9H9K5">
    <property type="molecule type" value="protein"/>
</dbReference>
<dbReference type="Bgee" id="ENSG00000226887">
    <property type="expression patterns" value="Expressed in placenta and 95 other cell types or tissues"/>
</dbReference>
<dbReference type="GO" id="GO:0005576">
    <property type="term" value="C:extracellular region"/>
    <property type="evidence" value="ECO:0007669"/>
    <property type="project" value="UniProtKB-SubCell"/>
</dbReference>
<dbReference type="GO" id="GO:0005886">
    <property type="term" value="C:plasma membrane"/>
    <property type="evidence" value="ECO:0007669"/>
    <property type="project" value="UniProtKB-SubCell"/>
</dbReference>
<dbReference type="Gene3D" id="1.10.287.210">
    <property type="match status" value="1"/>
</dbReference>
<dbReference type="InterPro" id="IPR018154">
    <property type="entry name" value="TLV/ENV_coat_polyprotein"/>
</dbReference>
<dbReference type="PANTHER" id="PTHR10424:SF78">
    <property type="entry name" value="ENDOGENOUS RETROVIRAL ENVELOPE PROTEIN HEMO"/>
    <property type="match status" value="1"/>
</dbReference>
<dbReference type="PANTHER" id="PTHR10424">
    <property type="entry name" value="VIRAL ENVELOPE PROTEIN"/>
    <property type="match status" value="1"/>
</dbReference>
<dbReference type="SUPFAM" id="SSF58069">
    <property type="entry name" value="Virus ectodomain"/>
    <property type="match status" value="1"/>
</dbReference>
<proteinExistence type="evidence at protein level"/>
<protein>
    <recommendedName>
        <fullName evidence="4">Endogenous retroviral envelope protein HEMO</fullName>
    </recommendedName>
    <alternativeName>
        <fullName evidence="4">Endogenous retrovirus group MER34 member 1 Env polyprotein</fullName>
    </alternativeName>
    <alternativeName>
        <fullName>HERV-MER_4q12 provirus ancestral Env polyprotein</fullName>
    </alternativeName>
    <alternativeName>
        <fullName evidence="3">Human endogenous MER34 (medium-reiteration-frequency-family-34) open reading frame</fullName>
    </alternativeName>
    <alternativeName>
        <fullName evidence="3">Human endogenous MER34 ORF</fullName>
        <shortName evidence="3">HEMO</shortName>
    </alternativeName>
    <component>
        <recommendedName>
            <fullName evidence="4">Endogenous retroviral envelope protein HEMO, secreted form</fullName>
        </recommendedName>
        <alternativeName>
            <fullName>Endogenous retroviral envelope protein HEMO, 48 kDa form</fullName>
        </alternativeName>
    </component>
</protein>
<sequence length="563" mass="63547">MGSLSNYALLQLTLTAFLTILVQPQHLLAPVFRTLSILTNQSNCWLCEHLDNAEQPELVFVPASASTWWTYSGQWMYERVWYPQAEVQNHSTSSYRKVTWHWEASMEAQGLSFAQVRLLEGNFSLCVENKNGSGPFLGNIPKQYCNQILWFDSTDGTFMPSIDVTNESRNDDDDTSVCLGTRQCSWFAGCTNRTWNSSAVPLIGLPNTQDYKWVDRNSGLTWSGNDTCLYSCQNQTKGLLYQLFRNLFCSYGLTEAHGKWRCADASITNDKGHDGHRTPTWWLTGSNLTLSVNNSGLFFLCGNGVYKGFPPKWSGRCGLGYLVPSLTRYLTLNASQITNLRSFIHKVTPHRCTQGDTDNPPLYCNPKDNSTIRALFPSLGTYDLEKAILNISKAMEQEFSATKQTLEAHQSKVSSLASASRKDHVLDIPTTQRQTACGTVGKQCCLYINYSEEIKSNIQRLHEASENLKNVPLLDWQGIFAKVGDWFRSWGYVLLIVLFCLFIFVLIYVRVFRKSRRSLNSQPLNLALSPQQSAQLLVSETSCQVSNRAMKGLTTHQYDTSLL</sequence>
<comment type="function">
    <text evidence="4">Endogenous envelope proteins originate from retroviral envelope proteins, which mediate receptor recognition and membrane fusion during early infection. Endogenous envelope proteins may have kept, lost or modified their original function during evolution.</text>
</comment>
<comment type="subcellular location">
    <molecule>Endogenous retroviral envelope protein HEMO</molecule>
    <subcellularLocation>
        <location evidence="2">Cell membrane</location>
        <topology evidence="1">Single-pass type I membrane protein</topology>
    </subcellularLocation>
    <text evidence="2">This uncleaved form present at the cell surface represents the major form (PubMed:28739914).</text>
</comment>
<comment type="subcellular location">
    <molecule>Endogenous retroviral envelope protein HEMO, secreted form</molecule>
    <subcellularLocation>
        <location evidence="2">Secreted</location>
    </subcellularLocation>
    <text evidence="2">This secreted form, which is released in the extracellular medium following cleavage, constitutes a minor form (PubMed:28739914).</text>
</comment>
<comment type="tissue specificity">
    <text evidence="2">Expressed at high level in the placenta and stem cells (at protein level) (PubMed:28739914). Also expressed in the kidney but at a lower level (PubMed:28739914). Endogenous retroviral envelope protein HEMO, secreted form: Present in the blood of pregnant women (at protein level) (PubMed:28739914).</text>
</comment>
<comment type="PTM">
    <text evidence="2">N-glycosylated.</text>
</comment>
<comment type="PTM">
    <molecule>Endogenous retroviral envelope protein HEMO</molecule>
    <text evidence="2">Cleaved by some metalloproteinase at 432-Gln-Arg-433 (mainly) or 433-Arg-Gln-434, leading to release the secreted form (Endogenous retroviral envelope protein HEMO, secreted form) in the extracellular medium.</text>
</comment>
<comment type="similarity">
    <text evidence="4">Belongs to the gamma type-C retroviral envelope protein family.</text>
</comment>
<comment type="sequence caution" evidence="4">
    <conflict type="frameshift">
        <sequence resource="EMBL-CDS" id="AAH69998"/>
    </conflict>
</comment>